<gene>
    <name type="primary">Defb10</name>
</gene>
<reference key="1">
    <citation type="journal article" date="2003" name="Mol. Biol. Evol.">
        <title>Signal sequence conservation and mature peptide divergence within subgroups of the murine beta-defensin gene family.</title>
        <authorList>
            <person name="Morrison G.M."/>
            <person name="Semple C.A.M."/>
            <person name="Kilanowski F.M."/>
            <person name="Hill R.E."/>
            <person name="Dorin J.R."/>
        </authorList>
    </citation>
    <scope>NUCLEOTIDE SEQUENCE [MRNA]</scope>
    <scope>TISSUE SPECIFICITY</scope>
    <source>
        <strain>C57BL/6N</strain>
        <tissue>Testis</tissue>
    </source>
</reference>
<reference key="2">
    <citation type="journal article" date="2009" name="PLoS Biol.">
        <title>Lineage-specific biology revealed by a finished genome assembly of the mouse.</title>
        <authorList>
            <person name="Church D.M."/>
            <person name="Goodstadt L."/>
            <person name="Hillier L.W."/>
            <person name="Zody M.C."/>
            <person name="Goldstein S."/>
            <person name="She X."/>
            <person name="Bult C.J."/>
            <person name="Agarwala R."/>
            <person name="Cherry J.L."/>
            <person name="DiCuccio M."/>
            <person name="Hlavina W."/>
            <person name="Kapustin Y."/>
            <person name="Meric P."/>
            <person name="Maglott D."/>
            <person name="Birtle Z."/>
            <person name="Marques A.C."/>
            <person name="Graves T."/>
            <person name="Zhou S."/>
            <person name="Teague B."/>
            <person name="Potamousis K."/>
            <person name="Churas C."/>
            <person name="Place M."/>
            <person name="Herschleb J."/>
            <person name="Runnheim R."/>
            <person name="Forrest D."/>
            <person name="Amos-Landgraf J."/>
            <person name="Schwartz D.C."/>
            <person name="Cheng Z."/>
            <person name="Lindblad-Toh K."/>
            <person name="Eichler E.E."/>
            <person name="Ponting C.P."/>
        </authorList>
    </citation>
    <scope>NUCLEOTIDE SEQUENCE [LARGE SCALE GENOMIC DNA]</scope>
    <source>
        <strain>C57BL/6J</strain>
    </source>
</reference>
<sequence>MRTLCSLLLICCLLFSYTTPAVGDLKHLILKAQLTRCYKFGGFCHYNICPGNSRFMSNCHPENLRCCKNIKQF</sequence>
<comment type="function">
    <text evidence="1">Has antibacterial activity.</text>
</comment>
<comment type="subcellular location">
    <subcellularLocation>
        <location evidence="1">Secreted</location>
    </subcellularLocation>
</comment>
<comment type="tissue specificity">
    <text evidence="3">Expressed in both adult and neonate brain, and very weakly in kidneys, epididymis, and testis.</text>
</comment>
<comment type="similarity">
    <text evidence="4">Belongs to the beta-defensin family.</text>
</comment>
<keyword id="KW-0044">Antibiotic</keyword>
<keyword id="KW-0929">Antimicrobial</keyword>
<keyword id="KW-0211">Defensin</keyword>
<keyword id="KW-1015">Disulfide bond</keyword>
<keyword id="KW-1185">Reference proteome</keyword>
<keyword id="KW-0964">Secreted</keyword>
<keyword id="KW-0732">Signal</keyword>
<name>DFB10_MOUSE</name>
<feature type="signal peptide" evidence="2">
    <location>
        <begin position="1"/>
        <end position="23"/>
    </location>
</feature>
<feature type="chain" id="PRO_0000006938" description="Beta-defensin 10">
    <location>
        <begin position="24"/>
        <end position="73"/>
    </location>
</feature>
<feature type="disulfide bond" evidence="1">
    <location>
        <begin position="37"/>
        <end position="66"/>
    </location>
</feature>
<feature type="disulfide bond" evidence="1">
    <location>
        <begin position="44"/>
        <end position="59"/>
    </location>
</feature>
<feature type="disulfide bond" evidence="1">
    <location>
        <begin position="49"/>
        <end position="67"/>
    </location>
</feature>
<organism>
    <name type="scientific">Mus musculus</name>
    <name type="common">Mouse</name>
    <dbReference type="NCBI Taxonomy" id="10090"/>
    <lineage>
        <taxon>Eukaryota</taxon>
        <taxon>Metazoa</taxon>
        <taxon>Chordata</taxon>
        <taxon>Craniata</taxon>
        <taxon>Vertebrata</taxon>
        <taxon>Euteleostomi</taxon>
        <taxon>Mammalia</taxon>
        <taxon>Eutheria</taxon>
        <taxon>Euarchontoglires</taxon>
        <taxon>Glires</taxon>
        <taxon>Rodentia</taxon>
        <taxon>Myomorpha</taxon>
        <taxon>Muroidea</taxon>
        <taxon>Muridae</taxon>
        <taxon>Murinae</taxon>
        <taxon>Mus</taxon>
        <taxon>Mus</taxon>
    </lineage>
</organism>
<proteinExistence type="evidence at transcript level"/>
<evidence type="ECO:0000250" key="1"/>
<evidence type="ECO:0000255" key="2"/>
<evidence type="ECO:0000269" key="3">
    <source>
    </source>
</evidence>
<evidence type="ECO:0000305" key="4"/>
<accession>Q8R2I8</accession>
<accession>A2A4E8</accession>
<dbReference type="EMBL" id="AJ437645">
    <property type="protein sequence ID" value="CAD26894.1"/>
    <property type="molecule type" value="mRNA"/>
</dbReference>
<dbReference type="EMBL" id="AL590619">
    <property type="status" value="NOT_ANNOTATED_CDS"/>
    <property type="molecule type" value="Genomic_DNA"/>
</dbReference>
<dbReference type="CCDS" id="CCDS40285.1"/>
<dbReference type="RefSeq" id="NP_631971.1">
    <property type="nucleotide sequence ID" value="NM_139225.1"/>
</dbReference>
<dbReference type="SMR" id="Q8R2I8"/>
<dbReference type="FunCoup" id="Q8R2I8">
    <property type="interactions" value="82"/>
</dbReference>
<dbReference type="STRING" id="10090.ENSMUSP00000061533"/>
<dbReference type="PaxDb" id="10090-ENSMUSP00000061533"/>
<dbReference type="DNASU" id="246085"/>
<dbReference type="Ensembl" id="ENSMUST00000054162.4">
    <property type="protein sequence ID" value="ENSMUSP00000061533.4"/>
    <property type="gene ID" value="ENSMUSG00000044743.4"/>
</dbReference>
<dbReference type="GeneID" id="246085"/>
<dbReference type="KEGG" id="mmu:246085"/>
<dbReference type="UCSC" id="uc009lcb.1">
    <property type="organism name" value="mouse"/>
</dbReference>
<dbReference type="AGR" id="MGI:2179205"/>
<dbReference type="CTD" id="246085"/>
<dbReference type="MGI" id="MGI:2179205">
    <property type="gene designation" value="Defb10"/>
</dbReference>
<dbReference type="VEuPathDB" id="HostDB:ENSMUSG00000044743"/>
<dbReference type="GeneTree" id="ENSGT00940000165558"/>
<dbReference type="HOGENOM" id="CLU_189296_1_0_1"/>
<dbReference type="InParanoid" id="Q8R2I8"/>
<dbReference type="OMA" id="CHYNICP"/>
<dbReference type="OrthoDB" id="9606199at2759"/>
<dbReference type="PhylomeDB" id="Q8R2I8"/>
<dbReference type="BioGRID-ORCS" id="246085">
    <property type="hits" value="1 hit in 58 CRISPR screens"/>
</dbReference>
<dbReference type="PRO" id="PR:Q8R2I8"/>
<dbReference type="Proteomes" id="UP000000589">
    <property type="component" value="Chromosome 8"/>
</dbReference>
<dbReference type="RNAct" id="Q8R2I8">
    <property type="molecule type" value="protein"/>
</dbReference>
<dbReference type="Bgee" id="ENSMUSG00000044743">
    <property type="expression patterns" value="Expressed in prostate gland ventral lobe and 21 other cell types or tissues"/>
</dbReference>
<dbReference type="GO" id="GO:0005576">
    <property type="term" value="C:extracellular region"/>
    <property type="evidence" value="ECO:0007669"/>
    <property type="project" value="UniProtKB-SubCell"/>
</dbReference>
<dbReference type="GO" id="GO:0042742">
    <property type="term" value="P:defense response to bacterium"/>
    <property type="evidence" value="ECO:0007669"/>
    <property type="project" value="UniProtKB-KW"/>
</dbReference>
<dbReference type="InterPro" id="IPR001855">
    <property type="entry name" value="Defensin_beta-like"/>
</dbReference>
<dbReference type="PANTHER" id="PTHR21388:SF4">
    <property type="entry name" value="BETA-DEFENSIN 10-RELATED"/>
    <property type="match status" value="1"/>
</dbReference>
<dbReference type="PANTHER" id="PTHR21388">
    <property type="entry name" value="BETA-DEFENSIN-RELATED"/>
    <property type="match status" value="1"/>
</dbReference>
<dbReference type="Pfam" id="PF00711">
    <property type="entry name" value="Defensin_beta"/>
    <property type="match status" value="1"/>
</dbReference>
<dbReference type="SUPFAM" id="SSF57392">
    <property type="entry name" value="Defensin-like"/>
    <property type="match status" value="1"/>
</dbReference>
<protein>
    <recommendedName>
        <fullName>Beta-defensin 10</fullName>
        <shortName>BD-10</shortName>
        <shortName>mBD-10</shortName>
    </recommendedName>
    <alternativeName>
        <fullName>Defensin, beta 10</fullName>
    </alternativeName>
</protein>